<accession>Q1R5V9</accession>
<reference key="1">
    <citation type="journal article" date="2006" name="Proc. Natl. Acad. Sci. U.S.A.">
        <title>Identification of genes subject to positive selection in uropathogenic strains of Escherichia coli: a comparative genomics approach.</title>
        <authorList>
            <person name="Chen S.L."/>
            <person name="Hung C.-S."/>
            <person name="Xu J."/>
            <person name="Reigstad C.S."/>
            <person name="Magrini V."/>
            <person name="Sabo A."/>
            <person name="Blasiar D."/>
            <person name="Bieri T."/>
            <person name="Meyer R.R."/>
            <person name="Ozersky P."/>
            <person name="Armstrong J.R."/>
            <person name="Fulton R.S."/>
            <person name="Latreille J.P."/>
            <person name="Spieth J."/>
            <person name="Hooton T.M."/>
            <person name="Mardis E.R."/>
            <person name="Hultgren S.J."/>
            <person name="Gordon J.I."/>
        </authorList>
    </citation>
    <scope>NUCLEOTIDE SEQUENCE [LARGE SCALE GENOMIC DNA]</scope>
    <source>
        <strain>UTI89 / UPEC</strain>
    </source>
</reference>
<gene>
    <name evidence="1" type="primary">thiE</name>
    <name type="ordered locus">UTI89_C3826</name>
</gene>
<evidence type="ECO:0000255" key="1">
    <source>
        <dbReference type="HAMAP-Rule" id="MF_00097"/>
    </source>
</evidence>
<evidence type="ECO:0000305" key="2"/>
<protein>
    <recommendedName>
        <fullName evidence="1">Thiamine-phosphate synthase</fullName>
        <shortName evidence="1">TP synthase</shortName>
        <shortName evidence="1">TPS</shortName>
        <ecNumber evidence="1">2.5.1.3</ecNumber>
    </recommendedName>
    <alternativeName>
        <fullName evidence="1">Thiamine-phosphate pyrophosphorylase</fullName>
        <shortName evidence="1">TMP pyrophosphorylase</shortName>
        <shortName evidence="1">TMP-PPase</shortName>
    </alternativeName>
</protein>
<organism>
    <name type="scientific">Escherichia coli (strain UTI89 / UPEC)</name>
    <dbReference type="NCBI Taxonomy" id="364106"/>
    <lineage>
        <taxon>Bacteria</taxon>
        <taxon>Pseudomonadati</taxon>
        <taxon>Pseudomonadota</taxon>
        <taxon>Gammaproteobacteria</taxon>
        <taxon>Enterobacterales</taxon>
        <taxon>Enterobacteriaceae</taxon>
        <taxon>Escherichia</taxon>
    </lineage>
</organism>
<feature type="chain" id="PRO_0000336394" description="Thiamine-phosphate synthase">
    <location>
        <begin position="1"/>
        <end position="211"/>
    </location>
</feature>
<feature type="binding site" evidence="1">
    <location>
        <begin position="37"/>
        <end position="41"/>
    </location>
    <ligand>
        <name>4-amino-2-methyl-5-(diphosphooxymethyl)pyrimidine</name>
        <dbReference type="ChEBI" id="CHEBI:57841"/>
    </ligand>
</feature>
<feature type="binding site" evidence="1">
    <location>
        <position position="69"/>
    </location>
    <ligand>
        <name>4-amino-2-methyl-5-(diphosphooxymethyl)pyrimidine</name>
        <dbReference type="ChEBI" id="CHEBI:57841"/>
    </ligand>
</feature>
<feature type="binding site" evidence="1">
    <location>
        <position position="70"/>
    </location>
    <ligand>
        <name>Mg(2+)</name>
        <dbReference type="ChEBI" id="CHEBI:18420"/>
    </ligand>
</feature>
<feature type="binding site" evidence="1">
    <location>
        <position position="89"/>
    </location>
    <ligand>
        <name>Mg(2+)</name>
        <dbReference type="ChEBI" id="CHEBI:18420"/>
    </ligand>
</feature>
<feature type="binding site" evidence="1">
    <location>
        <position position="108"/>
    </location>
    <ligand>
        <name>4-amino-2-methyl-5-(diphosphooxymethyl)pyrimidine</name>
        <dbReference type="ChEBI" id="CHEBI:57841"/>
    </ligand>
</feature>
<feature type="binding site" evidence="1">
    <location>
        <begin position="134"/>
        <end position="136"/>
    </location>
    <ligand>
        <name>2-[(2R,5Z)-2-carboxy-4-methylthiazol-5(2H)-ylidene]ethyl phosphate</name>
        <dbReference type="ChEBI" id="CHEBI:62899"/>
    </ligand>
</feature>
<feature type="binding site" evidence="1">
    <location>
        <position position="137"/>
    </location>
    <ligand>
        <name>4-amino-2-methyl-5-(diphosphooxymethyl)pyrimidine</name>
        <dbReference type="ChEBI" id="CHEBI:57841"/>
    </ligand>
</feature>
<feature type="binding site" evidence="1">
    <location>
        <position position="166"/>
    </location>
    <ligand>
        <name>2-[(2R,5Z)-2-carboxy-4-methylthiazol-5(2H)-ylidene]ethyl phosphate</name>
        <dbReference type="ChEBI" id="CHEBI:62899"/>
    </ligand>
</feature>
<feature type="binding site" evidence="1">
    <location>
        <begin position="186"/>
        <end position="187"/>
    </location>
    <ligand>
        <name>2-[(2R,5Z)-2-carboxy-4-methylthiazol-5(2H)-ylidene]ethyl phosphate</name>
        <dbReference type="ChEBI" id="CHEBI:62899"/>
    </ligand>
</feature>
<sequence>MYQPEFPPVPFRLGLYPVVDSVQWIERLLDAGVRTLQLRIKDRRDEEVEADVVAAIALGRRYNARLFINDYWRLAIKHQAYGVHLGQEDLQATDLSAIRAAGLRLGVSTHDDMEIDVALAARPSYIALGHVFPTQTKQMPSAPQGLEQLARHVERLADYPTVAIGGISLARAPAVIATGVGSIAVVSAITQAADWRLATAQLLEIAGVGDE</sequence>
<name>THIE_ECOUT</name>
<dbReference type="EC" id="2.5.1.3" evidence="1"/>
<dbReference type="EMBL" id="CP000243">
    <property type="protein sequence ID" value="ABE09255.1"/>
    <property type="status" value="ALT_INIT"/>
    <property type="molecule type" value="Genomic_DNA"/>
</dbReference>
<dbReference type="RefSeq" id="WP_000284655.1">
    <property type="nucleotide sequence ID" value="NZ_CP064825.1"/>
</dbReference>
<dbReference type="SMR" id="Q1R5V9"/>
<dbReference type="KEGG" id="eci:UTI89_C3826"/>
<dbReference type="HOGENOM" id="CLU_018272_3_3_6"/>
<dbReference type="UniPathway" id="UPA00060">
    <property type="reaction ID" value="UER00141"/>
</dbReference>
<dbReference type="Proteomes" id="UP000001952">
    <property type="component" value="Chromosome"/>
</dbReference>
<dbReference type="GO" id="GO:0005737">
    <property type="term" value="C:cytoplasm"/>
    <property type="evidence" value="ECO:0007669"/>
    <property type="project" value="TreeGrafter"/>
</dbReference>
<dbReference type="GO" id="GO:0000287">
    <property type="term" value="F:magnesium ion binding"/>
    <property type="evidence" value="ECO:0007669"/>
    <property type="project" value="UniProtKB-UniRule"/>
</dbReference>
<dbReference type="GO" id="GO:0004789">
    <property type="term" value="F:thiamine-phosphate diphosphorylase activity"/>
    <property type="evidence" value="ECO:0007669"/>
    <property type="project" value="UniProtKB-UniRule"/>
</dbReference>
<dbReference type="GO" id="GO:0009228">
    <property type="term" value="P:thiamine biosynthetic process"/>
    <property type="evidence" value="ECO:0007669"/>
    <property type="project" value="UniProtKB-KW"/>
</dbReference>
<dbReference type="GO" id="GO:0009229">
    <property type="term" value="P:thiamine diphosphate biosynthetic process"/>
    <property type="evidence" value="ECO:0007669"/>
    <property type="project" value="UniProtKB-UniRule"/>
</dbReference>
<dbReference type="CDD" id="cd00564">
    <property type="entry name" value="TMP_TenI"/>
    <property type="match status" value="1"/>
</dbReference>
<dbReference type="FunFam" id="3.20.20.70:FF:000064">
    <property type="entry name" value="Thiamine-phosphate synthase"/>
    <property type="match status" value="1"/>
</dbReference>
<dbReference type="Gene3D" id="3.20.20.70">
    <property type="entry name" value="Aldolase class I"/>
    <property type="match status" value="1"/>
</dbReference>
<dbReference type="HAMAP" id="MF_00097">
    <property type="entry name" value="TMP_synthase"/>
    <property type="match status" value="1"/>
</dbReference>
<dbReference type="InterPro" id="IPR013785">
    <property type="entry name" value="Aldolase_TIM"/>
</dbReference>
<dbReference type="InterPro" id="IPR036206">
    <property type="entry name" value="ThiamineP_synth_sf"/>
</dbReference>
<dbReference type="InterPro" id="IPR022998">
    <property type="entry name" value="ThiamineP_synth_TenI"/>
</dbReference>
<dbReference type="InterPro" id="IPR034291">
    <property type="entry name" value="TMP_synthase"/>
</dbReference>
<dbReference type="NCBIfam" id="NF002904">
    <property type="entry name" value="PRK03512.1"/>
    <property type="match status" value="1"/>
</dbReference>
<dbReference type="NCBIfam" id="TIGR00693">
    <property type="entry name" value="thiE"/>
    <property type="match status" value="1"/>
</dbReference>
<dbReference type="PANTHER" id="PTHR20857">
    <property type="entry name" value="THIAMINE-PHOSPHATE PYROPHOSPHORYLASE"/>
    <property type="match status" value="1"/>
</dbReference>
<dbReference type="PANTHER" id="PTHR20857:SF15">
    <property type="entry name" value="THIAMINE-PHOSPHATE SYNTHASE"/>
    <property type="match status" value="1"/>
</dbReference>
<dbReference type="Pfam" id="PF02581">
    <property type="entry name" value="TMP-TENI"/>
    <property type="match status" value="1"/>
</dbReference>
<dbReference type="SUPFAM" id="SSF51391">
    <property type="entry name" value="Thiamin phosphate synthase"/>
    <property type="match status" value="1"/>
</dbReference>
<proteinExistence type="inferred from homology"/>
<keyword id="KW-0460">Magnesium</keyword>
<keyword id="KW-0479">Metal-binding</keyword>
<keyword id="KW-0784">Thiamine biosynthesis</keyword>
<keyword id="KW-0808">Transferase</keyword>
<comment type="function">
    <text evidence="1">Condenses 4-methyl-5-(beta-hydroxyethyl)thiazole monophosphate (THZ-P) and 2-methyl-4-amino-5-hydroxymethyl pyrimidine pyrophosphate (HMP-PP) to form thiamine monophosphate (TMP).</text>
</comment>
<comment type="catalytic activity">
    <reaction evidence="1">
        <text>2-[(2R,5Z)-2-carboxy-4-methylthiazol-5(2H)-ylidene]ethyl phosphate + 4-amino-2-methyl-5-(diphosphooxymethyl)pyrimidine + 2 H(+) = thiamine phosphate + CO2 + diphosphate</text>
        <dbReference type="Rhea" id="RHEA:47844"/>
        <dbReference type="ChEBI" id="CHEBI:15378"/>
        <dbReference type="ChEBI" id="CHEBI:16526"/>
        <dbReference type="ChEBI" id="CHEBI:33019"/>
        <dbReference type="ChEBI" id="CHEBI:37575"/>
        <dbReference type="ChEBI" id="CHEBI:57841"/>
        <dbReference type="ChEBI" id="CHEBI:62899"/>
        <dbReference type="EC" id="2.5.1.3"/>
    </reaction>
</comment>
<comment type="catalytic activity">
    <reaction evidence="1">
        <text>2-(2-carboxy-4-methylthiazol-5-yl)ethyl phosphate + 4-amino-2-methyl-5-(diphosphooxymethyl)pyrimidine + 2 H(+) = thiamine phosphate + CO2 + diphosphate</text>
        <dbReference type="Rhea" id="RHEA:47848"/>
        <dbReference type="ChEBI" id="CHEBI:15378"/>
        <dbReference type="ChEBI" id="CHEBI:16526"/>
        <dbReference type="ChEBI" id="CHEBI:33019"/>
        <dbReference type="ChEBI" id="CHEBI:37575"/>
        <dbReference type="ChEBI" id="CHEBI:57841"/>
        <dbReference type="ChEBI" id="CHEBI:62890"/>
        <dbReference type="EC" id="2.5.1.3"/>
    </reaction>
</comment>
<comment type="catalytic activity">
    <reaction evidence="1">
        <text>4-methyl-5-(2-phosphooxyethyl)-thiazole + 4-amino-2-methyl-5-(diphosphooxymethyl)pyrimidine + H(+) = thiamine phosphate + diphosphate</text>
        <dbReference type="Rhea" id="RHEA:22328"/>
        <dbReference type="ChEBI" id="CHEBI:15378"/>
        <dbReference type="ChEBI" id="CHEBI:33019"/>
        <dbReference type="ChEBI" id="CHEBI:37575"/>
        <dbReference type="ChEBI" id="CHEBI:57841"/>
        <dbReference type="ChEBI" id="CHEBI:58296"/>
        <dbReference type="EC" id="2.5.1.3"/>
    </reaction>
</comment>
<comment type="cofactor">
    <cofactor evidence="1">
        <name>Mg(2+)</name>
        <dbReference type="ChEBI" id="CHEBI:18420"/>
    </cofactor>
    <text evidence="1">Binds 1 Mg(2+) ion per subunit.</text>
</comment>
<comment type="pathway">
    <text evidence="1">Cofactor biosynthesis; thiamine diphosphate biosynthesis; thiamine phosphate from 4-amino-2-methyl-5-diphosphomethylpyrimidine and 4-methyl-5-(2-phosphoethyl)-thiazole: step 1/1.</text>
</comment>
<comment type="similarity">
    <text evidence="1">Belongs to the thiamine-phosphate synthase family.</text>
</comment>
<comment type="sequence caution" evidence="2">
    <conflict type="erroneous initiation">
        <sequence resource="EMBL-CDS" id="ABE09255"/>
    </conflict>
</comment>